<protein>
    <recommendedName>
        <fullName>T-complex protein 1 subunit gamma</fullName>
        <shortName>TCP-1-gamma</shortName>
    </recommendedName>
    <alternativeName>
        <fullName>CCT-gamma</fullName>
    </alternativeName>
    <alternativeName>
        <fullName>Chaperonin subunit CCTV gamma</fullName>
    </alternativeName>
</protein>
<feature type="chain" id="PRO_0000128328" description="T-complex protein 1 subunit gamma">
    <location>
        <begin position="1"/>
        <end position="559"/>
    </location>
</feature>
<feature type="region of interest" description="Disordered" evidence="2">
    <location>
        <begin position="531"/>
        <end position="559"/>
    </location>
</feature>
<feature type="disulfide bond" evidence="1">
    <location>
        <begin position="368"/>
        <end position="374"/>
    </location>
</feature>
<accession>O00782</accession>
<sequence>MSSRAAVFILNQNAKREQGRKAQTANIKAARAVSDIVRTTLGPKSMLKMLLDPMGGIVLTNDGNAILREIDVAHPAAKSMIELARAQDEEVGDGTTSVIILAGEILSAVESFLERDIHPTVIVGAYFQALEEIVRLTESYGEPIDIENENDLQKIVSSCIGTKFSSKWGNLIVDLAVKAVKSVYKKEGDYVEIDVKRYAKVEKIPGGLLEESVVLDGVMFNKDVTHPGMRRYIENPRVVLLDCPLEYKKGESMTNMEFTKEEDFKKALMMEEEEVKKMCAEDILRVKPDVVITEKGVSDTAQHFLLKYGNCTVIRRIRKTDNNRIARVTGATIANRPEELQESDVGTKCGLFEIKKIGDEYFSFMTKCENPKACSILLRGASKDVLNEIERNLHDALGVARNVMVNPKLVPGGGAIEMELACRLMEFSQKIEGMQQWPFKALAGALEVIPRTLAQNCGADVVRVMTELRAKHANDKEGLYWGIDGNTGKIRDMRESNVWDPISVKQQTLKTSIEATCMLLRIDDIVSGIKKDKRGGAGQRGGDRGQGDQEETFGDQRDG</sequence>
<organism>
    <name type="scientific">Oxytricha granulifera</name>
    <name type="common">Ciliate</name>
    <dbReference type="NCBI Taxonomy" id="5947"/>
    <lineage>
        <taxon>Eukaryota</taxon>
        <taxon>Sar</taxon>
        <taxon>Alveolata</taxon>
        <taxon>Ciliophora</taxon>
        <taxon>Intramacronucleata</taxon>
        <taxon>Spirotrichea</taxon>
        <taxon>Stichotrichia</taxon>
        <taxon>Sporadotrichida</taxon>
        <taxon>Oxytrichidae</taxon>
        <taxon>Oxytrichinae</taxon>
        <taxon>Oxytricha</taxon>
    </lineage>
</organism>
<evidence type="ECO:0000250" key="1"/>
<evidence type="ECO:0000256" key="2">
    <source>
        <dbReference type="SAM" id="MobiDB-lite"/>
    </source>
</evidence>
<evidence type="ECO:0000305" key="3"/>
<reference key="1">
    <citation type="journal article" date="1997" name="Eur. J. Biochem.">
        <title>Cloning and characterization of the Oxytricha granulifera chaperonin containing tailless complex polypeptide 1 gamma gene.</title>
        <authorList>
            <person name="Palmedo G."/>
            <person name="Ammermann D."/>
        </authorList>
    </citation>
    <scope>NUCLEOTIDE SEQUENCE [GENOMIC DNA]</scope>
    <source>
        <strain>O 5-1</strain>
    </source>
</reference>
<keyword id="KW-0067">ATP-binding</keyword>
<keyword id="KW-0143">Chaperone</keyword>
<keyword id="KW-0963">Cytoplasm</keyword>
<keyword id="KW-1015">Disulfide bond</keyword>
<keyword id="KW-0547">Nucleotide-binding</keyword>
<dbReference type="EMBL" id="Y11967">
    <property type="protein sequence ID" value="CAA72704.1"/>
    <property type="molecule type" value="Genomic_DNA"/>
</dbReference>
<dbReference type="SMR" id="O00782"/>
<dbReference type="GO" id="GO:0005832">
    <property type="term" value="C:chaperonin-containing T-complex"/>
    <property type="evidence" value="ECO:0007669"/>
    <property type="project" value="UniProtKB-ARBA"/>
</dbReference>
<dbReference type="GO" id="GO:0005524">
    <property type="term" value="F:ATP binding"/>
    <property type="evidence" value="ECO:0007669"/>
    <property type="project" value="UniProtKB-KW"/>
</dbReference>
<dbReference type="GO" id="GO:0016887">
    <property type="term" value="F:ATP hydrolysis activity"/>
    <property type="evidence" value="ECO:0007669"/>
    <property type="project" value="InterPro"/>
</dbReference>
<dbReference type="GO" id="GO:0140662">
    <property type="term" value="F:ATP-dependent protein folding chaperone"/>
    <property type="evidence" value="ECO:0007669"/>
    <property type="project" value="InterPro"/>
</dbReference>
<dbReference type="GO" id="GO:0051082">
    <property type="term" value="F:unfolded protein binding"/>
    <property type="evidence" value="ECO:0007669"/>
    <property type="project" value="InterPro"/>
</dbReference>
<dbReference type="CDD" id="cd03337">
    <property type="entry name" value="TCP1_gamma"/>
    <property type="match status" value="1"/>
</dbReference>
<dbReference type="FunFam" id="1.10.560.10:FF:000017">
    <property type="entry name" value="T-complex protein 1 subunit eta"/>
    <property type="match status" value="1"/>
</dbReference>
<dbReference type="FunFam" id="1.10.560.10:FF:000085">
    <property type="entry name" value="T-complex protein 1 subunit gamma"/>
    <property type="match status" value="1"/>
</dbReference>
<dbReference type="FunFam" id="3.50.7.10:FF:000005">
    <property type="entry name" value="T-complex protein 1 subunit gamma"/>
    <property type="match status" value="1"/>
</dbReference>
<dbReference type="Gene3D" id="3.50.7.10">
    <property type="entry name" value="GroEL"/>
    <property type="match status" value="1"/>
</dbReference>
<dbReference type="Gene3D" id="1.10.560.10">
    <property type="entry name" value="GroEL-like equatorial domain"/>
    <property type="match status" value="1"/>
</dbReference>
<dbReference type="Gene3D" id="3.30.260.10">
    <property type="entry name" value="TCP-1-like chaperonin intermediate domain"/>
    <property type="match status" value="1"/>
</dbReference>
<dbReference type="InterPro" id="IPR012719">
    <property type="entry name" value="Chap_CCT_gamma"/>
</dbReference>
<dbReference type="InterPro" id="IPR017998">
    <property type="entry name" value="Chaperone_TCP-1"/>
</dbReference>
<dbReference type="InterPro" id="IPR002194">
    <property type="entry name" value="Chaperonin_TCP-1_CS"/>
</dbReference>
<dbReference type="InterPro" id="IPR002423">
    <property type="entry name" value="Cpn60/GroEL/TCP-1"/>
</dbReference>
<dbReference type="InterPro" id="IPR027409">
    <property type="entry name" value="GroEL-like_apical_dom_sf"/>
</dbReference>
<dbReference type="InterPro" id="IPR027413">
    <property type="entry name" value="GROEL-like_equatorial_sf"/>
</dbReference>
<dbReference type="InterPro" id="IPR027410">
    <property type="entry name" value="TCP-1-like_intermed_sf"/>
</dbReference>
<dbReference type="InterPro" id="IPR053374">
    <property type="entry name" value="TCP-1_chaperonin"/>
</dbReference>
<dbReference type="InterPro" id="IPR054827">
    <property type="entry name" value="thermosome_alpha"/>
</dbReference>
<dbReference type="NCBIfam" id="TIGR02344">
    <property type="entry name" value="chap_CCT_gamma"/>
    <property type="match status" value="1"/>
</dbReference>
<dbReference type="NCBIfam" id="NF041082">
    <property type="entry name" value="thermosome_alpha"/>
    <property type="match status" value="1"/>
</dbReference>
<dbReference type="NCBIfam" id="NF041083">
    <property type="entry name" value="thermosome_beta"/>
    <property type="match status" value="1"/>
</dbReference>
<dbReference type="PANTHER" id="PTHR11353">
    <property type="entry name" value="CHAPERONIN"/>
    <property type="match status" value="1"/>
</dbReference>
<dbReference type="Pfam" id="PF00118">
    <property type="entry name" value="Cpn60_TCP1"/>
    <property type="match status" value="1"/>
</dbReference>
<dbReference type="PRINTS" id="PR00304">
    <property type="entry name" value="TCOMPLEXTCP1"/>
</dbReference>
<dbReference type="SUPFAM" id="SSF52029">
    <property type="entry name" value="GroEL apical domain-like"/>
    <property type="match status" value="1"/>
</dbReference>
<dbReference type="SUPFAM" id="SSF48592">
    <property type="entry name" value="GroEL equatorial domain-like"/>
    <property type="match status" value="1"/>
</dbReference>
<dbReference type="SUPFAM" id="SSF54849">
    <property type="entry name" value="GroEL-intermediate domain like"/>
    <property type="match status" value="1"/>
</dbReference>
<dbReference type="PROSITE" id="PS00750">
    <property type="entry name" value="TCP1_1"/>
    <property type="match status" value="1"/>
</dbReference>
<dbReference type="PROSITE" id="PS00751">
    <property type="entry name" value="TCP1_2"/>
    <property type="match status" value="1"/>
</dbReference>
<dbReference type="PROSITE" id="PS00995">
    <property type="entry name" value="TCP1_3"/>
    <property type="match status" value="1"/>
</dbReference>
<proteinExistence type="inferred from homology"/>
<comment type="function">
    <text evidence="1">Molecular chaperone; assists the folding of proteins upon ATP hydrolysis. Known to play a role, in vitro, in the folding of actin and tubulin (By similarity).</text>
</comment>
<comment type="subunit">
    <text evidence="1">Heterooligomeric complex of about 850 to 900 kDa that forms two stacked rings, 12 to 16 nm in diameter.</text>
</comment>
<comment type="subcellular location">
    <subcellularLocation>
        <location>Cytoplasm</location>
    </subcellularLocation>
</comment>
<comment type="similarity">
    <text evidence="3">Belongs to the TCP-1 chaperonin family.</text>
</comment>
<name>TCPG_OXYGR</name>